<organism>
    <name type="scientific">Escherichia coli O157:H7</name>
    <dbReference type="NCBI Taxonomy" id="83334"/>
    <lineage>
        <taxon>Bacteria</taxon>
        <taxon>Pseudomonadati</taxon>
        <taxon>Pseudomonadota</taxon>
        <taxon>Gammaproteobacteria</taxon>
        <taxon>Enterobacterales</taxon>
        <taxon>Enterobacteriaceae</taxon>
        <taxon>Escherichia</taxon>
    </lineage>
</organism>
<reference key="1">
    <citation type="journal article" date="2001" name="Nature">
        <title>Genome sequence of enterohaemorrhagic Escherichia coli O157:H7.</title>
        <authorList>
            <person name="Perna N.T."/>
            <person name="Plunkett G. III"/>
            <person name="Burland V."/>
            <person name="Mau B."/>
            <person name="Glasner J.D."/>
            <person name="Rose D.J."/>
            <person name="Mayhew G.F."/>
            <person name="Evans P.S."/>
            <person name="Gregor J."/>
            <person name="Kirkpatrick H.A."/>
            <person name="Posfai G."/>
            <person name="Hackett J."/>
            <person name="Klink S."/>
            <person name="Boutin A."/>
            <person name="Shao Y."/>
            <person name="Miller L."/>
            <person name="Grotbeck E.J."/>
            <person name="Davis N.W."/>
            <person name="Lim A."/>
            <person name="Dimalanta E.T."/>
            <person name="Potamousis K."/>
            <person name="Apodaca J."/>
            <person name="Anantharaman T.S."/>
            <person name="Lin J."/>
            <person name="Yen G."/>
            <person name="Schwartz D.C."/>
            <person name="Welch R.A."/>
            <person name="Blattner F.R."/>
        </authorList>
    </citation>
    <scope>NUCLEOTIDE SEQUENCE [LARGE SCALE GENOMIC DNA]</scope>
    <source>
        <strain>O157:H7 / EDL933 / ATCC 700927 / EHEC</strain>
    </source>
</reference>
<reference key="2">
    <citation type="journal article" date="2001" name="DNA Res.">
        <title>Complete genome sequence of enterohemorrhagic Escherichia coli O157:H7 and genomic comparison with a laboratory strain K-12.</title>
        <authorList>
            <person name="Hayashi T."/>
            <person name="Makino K."/>
            <person name="Ohnishi M."/>
            <person name="Kurokawa K."/>
            <person name="Ishii K."/>
            <person name="Yokoyama K."/>
            <person name="Han C.-G."/>
            <person name="Ohtsubo E."/>
            <person name="Nakayama K."/>
            <person name="Murata T."/>
            <person name="Tanaka M."/>
            <person name="Tobe T."/>
            <person name="Iida T."/>
            <person name="Takami H."/>
            <person name="Honda T."/>
            <person name="Sasakawa C."/>
            <person name="Ogasawara N."/>
            <person name="Yasunaga T."/>
            <person name="Kuhara S."/>
            <person name="Shiba T."/>
            <person name="Hattori M."/>
            <person name="Shinagawa H."/>
        </authorList>
    </citation>
    <scope>NUCLEOTIDE SEQUENCE [LARGE SCALE GENOMIC DNA]</scope>
    <source>
        <strain>O157:H7 / Sakai / RIMD 0509952 / EHEC</strain>
    </source>
</reference>
<sequence>MQLTSFTDYGLRALIYMASLPEGRMTSISEVTDVYGVSRNHMVKIINQLSRAGYVTAVRGKNGGIRLGKPASAIRIGDVVRELEPLSLVNCSSEFCHITPACRLKQALSKAVQSFLTELDNYTLADLVEENQPLYKLLLVE</sequence>
<proteinExistence type="inferred from homology"/>
<dbReference type="EMBL" id="AE005174">
    <property type="protein sequence ID" value="AAG59374.1"/>
    <property type="molecule type" value="Genomic_DNA"/>
</dbReference>
<dbReference type="EMBL" id="BA000007">
    <property type="protein sequence ID" value="BAB38577.1"/>
    <property type="molecule type" value="Genomic_DNA"/>
</dbReference>
<dbReference type="PIR" id="B86114">
    <property type="entry name" value="B86114"/>
</dbReference>
<dbReference type="PIR" id="B91273">
    <property type="entry name" value="B91273"/>
</dbReference>
<dbReference type="RefSeq" id="NP_313181.1">
    <property type="nucleotide sequence ID" value="NC_002695.1"/>
</dbReference>
<dbReference type="RefSeq" id="WP_001177639.1">
    <property type="nucleotide sequence ID" value="NZ_VOAI01000008.1"/>
</dbReference>
<dbReference type="SMR" id="P0AF65"/>
<dbReference type="STRING" id="155864.Z5785"/>
<dbReference type="GeneID" id="914030"/>
<dbReference type="GeneID" id="93777643"/>
<dbReference type="KEGG" id="ece:Z5785"/>
<dbReference type="KEGG" id="ecs:ECs_5154"/>
<dbReference type="PATRIC" id="fig|386585.9.peg.5387"/>
<dbReference type="eggNOG" id="COG1959">
    <property type="taxonomic scope" value="Bacteria"/>
</dbReference>
<dbReference type="HOGENOM" id="CLU_107144_2_1_6"/>
<dbReference type="OMA" id="AQEAFYA"/>
<dbReference type="Proteomes" id="UP000000558">
    <property type="component" value="Chromosome"/>
</dbReference>
<dbReference type="Proteomes" id="UP000002519">
    <property type="component" value="Chromosome"/>
</dbReference>
<dbReference type="GO" id="GO:0005829">
    <property type="term" value="C:cytosol"/>
    <property type="evidence" value="ECO:0007669"/>
    <property type="project" value="TreeGrafter"/>
</dbReference>
<dbReference type="GO" id="GO:0051537">
    <property type="term" value="F:2 iron, 2 sulfur cluster binding"/>
    <property type="evidence" value="ECO:0007669"/>
    <property type="project" value="UniProtKB-KW"/>
</dbReference>
<dbReference type="GO" id="GO:0003700">
    <property type="term" value="F:DNA-binding transcription factor activity"/>
    <property type="evidence" value="ECO:0007669"/>
    <property type="project" value="UniProtKB-UniRule"/>
</dbReference>
<dbReference type="GO" id="GO:0003690">
    <property type="term" value="F:double-stranded DNA binding"/>
    <property type="evidence" value="ECO:0007669"/>
    <property type="project" value="UniProtKB-UniRule"/>
</dbReference>
<dbReference type="GO" id="GO:0005506">
    <property type="term" value="F:iron ion binding"/>
    <property type="evidence" value="ECO:0007669"/>
    <property type="project" value="UniProtKB-UniRule"/>
</dbReference>
<dbReference type="GO" id="GO:0045892">
    <property type="term" value="P:negative regulation of DNA-templated transcription"/>
    <property type="evidence" value="ECO:0007669"/>
    <property type="project" value="InterPro"/>
</dbReference>
<dbReference type="FunFam" id="1.10.10.10:FF:000105">
    <property type="entry name" value="HTH-type transcriptional repressor NsrR"/>
    <property type="match status" value="1"/>
</dbReference>
<dbReference type="Gene3D" id="1.10.10.10">
    <property type="entry name" value="Winged helix-like DNA-binding domain superfamily/Winged helix DNA-binding domain"/>
    <property type="match status" value="1"/>
</dbReference>
<dbReference type="HAMAP" id="MF_01177">
    <property type="entry name" value="HTH_type_NsrR"/>
    <property type="match status" value="1"/>
</dbReference>
<dbReference type="InterPro" id="IPR030489">
    <property type="entry name" value="TR_Rrf2-type_CS"/>
</dbReference>
<dbReference type="InterPro" id="IPR000944">
    <property type="entry name" value="Tscrpt_reg_Rrf2"/>
</dbReference>
<dbReference type="InterPro" id="IPR023761">
    <property type="entry name" value="Tscrpt_rep_HTH_NsrR"/>
</dbReference>
<dbReference type="InterPro" id="IPR036388">
    <property type="entry name" value="WH-like_DNA-bd_sf"/>
</dbReference>
<dbReference type="InterPro" id="IPR036390">
    <property type="entry name" value="WH_DNA-bd_sf"/>
</dbReference>
<dbReference type="NCBIfam" id="NF008240">
    <property type="entry name" value="PRK11014.1"/>
    <property type="match status" value="1"/>
</dbReference>
<dbReference type="NCBIfam" id="TIGR00738">
    <property type="entry name" value="rrf2_super"/>
    <property type="match status" value="1"/>
</dbReference>
<dbReference type="PANTHER" id="PTHR33221:SF4">
    <property type="entry name" value="HTH-TYPE TRANSCRIPTIONAL REPRESSOR NSRR"/>
    <property type="match status" value="1"/>
</dbReference>
<dbReference type="PANTHER" id="PTHR33221">
    <property type="entry name" value="WINGED HELIX-TURN-HELIX TRANSCRIPTIONAL REGULATOR, RRF2 FAMILY"/>
    <property type="match status" value="1"/>
</dbReference>
<dbReference type="Pfam" id="PF02082">
    <property type="entry name" value="Rrf2"/>
    <property type="match status" value="1"/>
</dbReference>
<dbReference type="SUPFAM" id="SSF46785">
    <property type="entry name" value="Winged helix' DNA-binding domain"/>
    <property type="match status" value="1"/>
</dbReference>
<dbReference type="PROSITE" id="PS01332">
    <property type="entry name" value="HTH_RRF2_1"/>
    <property type="match status" value="1"/>
</dbReference>
<dbReference type="PROSITE" id="PS51197">
    <property type="entry name" value="HTH_RRF2_2"/>
    <property type="match status" value="1"/>
</dbReference>
<evidence type="ECO:0000255" key="1">
    <source>
        <dbReference type="HAMAP-Rule" id="MF_01177"/>
    </source>
</evidence>
<protein>
    <recommendedName>
        <fullName evidence="1">HTH-type transcriptional repressor NsrR</fullName>
    </recommendedName>
</protein>
<comment type="function">
    <text evidence="1">Nitric oxide-sensitive repressor of genes involved in protecting the cell against nitrosative stress. May require iron for activity.</text>
</comment>
<comment type="cofactor">
    <cofactor evidence="1">
        <name>[2Fe-2S] cluster</name>
        <dbReference type="ChEBI" id="CHEBI:190135"/>
    </cofactor>
    <text evidence="1">Binds 1 [2Fe-2S] cluster per subunit.</text>
</comment>
<gene>
    <name evidence="1" type="primary">nsrR</name>
    <name type="ordered locus">Z5785</name>
    <name type="ordered locus">ECs5154</name>
</gene>
<name>NSRR_ECO57</name>
<accession>P0AF65</accession>
<accession>P21498</accession>
<accession>P72442</accession>
<keyword id="KW-0001">2Fe-2S</keyword>
<keyword id="KW-0238">DNA-binding</keyword>
<keyword id="KW-0408">Iron</keyword>
<keyword id="KW-0411">Iron-sulfur</keyword>
<keyword id="KW-0479">Metal-binding</keyword>
<keyword id="KW-1185">Reference proteome</keyword>
<keyword id="KW-0678">Repressor</keyword>
<keyword id="KW-0804">Transcription</keyword>
<keyword id="KW-0805">Transcription regulation</keyword>
<feature type="chain" id="PRO_0000109556" description="HTH-type transcriptional repressor NsrR">
    <location>
        <begin position="1"/>
        <end position="141"/>
    </location>
</feature>
<feature type="domain" description="HTH rrf2-type" evidence="1">
    <location>
        <begin position="2"/>
        <end position="129"/>
    </location>
</feature>
<feature type="DNA-binding region" description="H-T-H motif" evidence="1">
    <location>
        <begin position="28"/>
        <end position="51"/>
    </location>
</feature>
<feature type="binding site" evidence="1">
    <location>
        <position position="91"/>
    </location>
    <ligand>
        <name>[2Fe-2S] cluster</name>
        <dbReference type="ChEBI" id="CHEBI:190135"/>
    </ligand>
</feature>
<feature type="binding site" evidence="1">
    <location>
        <position position="96"/>
    </location>
    <ligand>
        <name>[2Fe-2S] cluster</name>
        <dbReference type="ChEBI" id="CHEBI:190135"/>
    </ligand>
</feature>
<feature type="binding site" evidence="1">
    <location>
        <position position="102"/>
    </location>
    <ligand>
        <name>[2Fe-2S] cluster</name>
        <dbReference type="ChEBI" id="CHEBI:190135"/>
    </ligand>
</feature>